<proteinExistence type="evidence at protein level"/>
<reference key="1">
    <citation type="journal article" date="2007" name="Proc. Natl. Acad. Sci. U.S.A.">
        <title>Genome plasticity of BCG and impact on vaccine efficacy.</title>
        <authorList>
            <person name="Brosch R."/>
            <person name="Gordon S.V."/>
            <person name="Garnier T."/>
            <person name="Eiglmeier K."/>
            <person name="Frigui W."/>
            <person name="Valenti P."/>
            <person name="Dos Santos S."/>
            <person name="Duthoy S."/>
            <person name="Lacroix C."/>
            <person name="Garcia-Pelayo C."/>
            <person name="Inwald J.K."/>
            <person name="Golby P."/>
            <person name="Garcia J.N."/>
            <person name="Hewinson R.G."/>
            <person name="Behr M.A."/>
            <person name="Quail M.A."/>
            <person name="Churcher C."/>
            <person name="Barrell B.G."/>
            <person name="Parkhill J."/>
            <person name="Cole S.T."/>
        </authorList>
    </citation>
    <scope>NUCLEOTIDE SEQUENCE [LARGE SCALE GENOMIC DNA]</scope>
    <source>
        <strain>BCG / Pasteur 1173P2</strain>
    </source>
</reference>
<reference key="2">
    <citation type="journal article" date="2010" name="Protein Cell">
        <title>Identification of four novel DC-SIGN ligands on Mycobacterium bovis BCG.</title>
        <authorList>
            <person name="Carroll M.V."/>
            <person name="Sim R.B."/>
            <person name="Bigi F."/>
            <person name="Jaekel A."/>
            <person name="Antrobus R."/>
            <person name="Mitchell D.A."/>
        </authorList>
    </citation>
    <scope>FUNCTION</scope>
    <scope>IDENTIFICATION BY MASS SPECTROMETRY</scope>
    <scope>INTERACTION WITH HUMAN CD209</scope>
    <source>
        <strain>BCG / Pasteur 1173P2</strain>
    </source>
</reference>
<reference key="3">
    <citation type="journal article" date="2011" name="J. Clin. Invest.">
        <title>Mycobacteria release active membrane vesicles that modulate immune responses in a TLR2-dependent manner in mice.</title>
        <authorList>
            <person name="Prados-Rosales R."/>
            <person name="Baena A."/>
            <person name="Martinez L.R."/>
            <person name="Luque-Garcia J."/>
            <person name="Kalscheuer R."/>
            <person name="Veeraraghavan U."/>
            <person name="Camara C."/>
            <person name="Nosanchuk J.D."/>
            <person name="Besra G.S."/>
            <person name="Chen B."/>
            <person name="Jimenez J."/>
            <person name="Glatman-Freedman A."/>
            <person name="Jacobs W.R. Jr."/>
            <person name="Porcelli S.A."/>
            <person name="Casadevall A."/>
        </authorList>
    </citation>
    <scope>SUBCELLULAR LOCATION</scope>
    <source>
        <strain>BCG / Pasteur 1173P2</strain>
    </source>
</reference>
<sequence length="625" mass="66831">MARAVGIDLGTTNSVVSVLEGGDPVVVANSEGSRTTPSIVAFARNGEVLVGQPAKNQAVTNVDRTVRSVKRHMGSDWSIEIDGKKYTAPEISARILMKLKRDAEAYLGEDITDAVITTPAYFNDAQRQATKDAGQIAGLNVLRIVNEPTAAALAYGLDKGEKEQRILVFDLGGGTFDVSLLEIGEGVVEVRATSGDNHLGGDDWDQRVVDWLVDKFKGTSGIDLTKDKMAMQRLREAAEKAKIELSSSQSTSINLPYITVDADKNPLFLDEQLTRAEFQRITQDLLDRTRKPFQSVIADTGISVSEIDHVVLVGGSTRMPAVTDLVKELTGGKEPNKGVNPDEVVAVGAALQAGVLKGEVKDVLLLDVTPLSLGIETKGGVMTRLIERNTTIPTKRSETFTTADDNQPSVQIQVYQGEREIAAHNKLLGSFELTGIPPAPRGIPQIEVTFDIDANGIVHVTAKDKGTGKENTIRIQEGSGLSKEDIDRMIKDAEAHAEEDRKRREEADVRNQAETLVYQTEKFVKEQREAEGGSKVPEDTLNKVDAAVAEAKAALGGSDISAIKSAMEKLGQESQALGQAIYEAAQAASQATGAAHPGGEPGGAHPGSADDVVDAEVVDDGREAK</sequence>
<feature type="chain" id="PRO_1000059606" description="Chaperone protein DnaK">
    <location>
        <begin position="1"/>
        <end position="625"/>
    </location>
</feature>
<feature type="region of interest" description="Disordered" evidence="3">
    <location>
        <begin position="586"/>
        <end position="625"/>
    </location>
</feature>
<feature type="compositionally biased region" description="Low complexity" evidence="3">
    <location>
        <begin position="586"/>
        <end position="598"/>
    </location>
</feature>
<feature type="modified residue" description="Phosphothreonine; by autocatalysis" evidence="2">
    <location>
        <position position="175"/>
    </location>
</feature>
<protein>
    <recommendedName>
        <fullName evidence="2">Chaperone protein DnaK</fullName>
    </recommendedName>
    <alternativeName>
        <fullName evidence="2">HSP70</fullName>
    </alternativeName>
    <alternativeName>
        <fullName evidence="2">Heat shock 70 kDa protein</fullName>
    </alternativeName>
    <alternativeName>
        <fullName evidence="2">Heat shock protein 70</fullName>
    </alternativeName>
</protein>
<name>DNAK_MYCBP</name>
<evidence type="ECO:0000250" key="1">
    <source>
        <dbReference type="UniProtKB" id="P9WMJ9"/>
    </source>
</evidence>
<evidence type="ECO:0000255" key="2">
    <source>
        <dbReference type="HAMAP-Rule" id="MF_00332"/>
    </source>
</evidence>
<evidence type="ECO:0000256" key="3">
    <source>
        <dbReference type="SAM" id="MobiDB-lite"/>
    </source>
</evidence>
<evidence type="ECO:0000269" key="4">
    <source>
    </source>
</evidence>
<evidence type="ECO:0000269" key="5">
    <source>
    </source>
</evidence>
<evidence type="ECO:0000305" key="6"/>
<gene>
    <name evidence="2" type="primary">dnaK</name>
    <name type="ordered locus">BCG_0389</name>
</gene>
<dbReference type="EMBL" id="AM408590">
    <property type="protein sequence ID" value="CAL70374.1"/>
    <property type="molecule type" value="Genomic_DNA"/>
</dbReference>
<dbReference type="RefSeq" id="WP_003401814.1">
    <property type="nucleotide sequence ID" value="NC_008769.1"/>
</dbReference>
<dbReference type="SMR" id="A1KFH2"/>
<dbReference type="GeneID" id="45424316"/>
<dbReference type="KEGG" id="mbb:BCG_0389"/>
<dbReference type="HOGENOM" id="CLU_005965_2_3_11"/>
<dbReference type="Proteomes" id="UP000001472">
    <property type="component" value="Chromosome"/>
</dbReference>
<dbReference type="GO" id="GO:0097691">
    <property type="term" value="C:bacterial extracellular vesicle"/>
    <property type="evidence" value="ECO:0000314"/>
    <property type="project" value="UniProtKB"/>
</dbReference>
<dbReference type="GO" id="GO:0005737">
    <property type="term" value="C:cytoplasm"/>
    <property type="evidence" value="ECO:0007669"/>
    <property type="project" value="UniProtKB-SubCell"/>
</dbReference>
<dbReference type="GO" id="GO:0005524">
    <property type="term" value="F:ATP binding"/>
    <property type="evidence" value="ECO:0007669"/>
    <property type="project" value="UniProtKB-UniRule"/>
</dbReference>
<dbReference type="GO" id="GO:0140662">
    <property type="term" value="F:ATP-dependent protein folding chaperone"/>
    <property type="evidence" value="ECO:0007669"/>
    <property type="project" value="InterPro"/>
</dbReference>
<dbReference type="GO" id="GO:0051082">
    <property type="term" value="F:unfolded protein binding"/>
    <property type="evidence" value="ECO:0007669"/>
    <property type="project" value="InterPro"/>
</dbReference>
<dbReference type="CDD" id="cd10234">
    <property type="entry name" value="ASKHA_NBD_HSP70_DnaK-like"/>
    <property type="match status" value="1"/>
</dbReference>
<dbReference type="FunFam" id="2.60.34.10:FF:000014">
    <property type="entry name" value="Chaperone protein DnaK HSP70"/>
    <property type="match status" value="1"/>
</dbReference>
<dbReference type="FunFam" id="1.20.1270.10:FF:000001">
    <property type="entry name" value="Molecular chaperone DnaK"/>
    <property type="match status" value="1"/>
</dbReference>
<dbReference type="FunFam" id="3.30.420.40:FF:000071">
    <property type="entry name" value="Molecular chaperone DnaK"/>
    <property type="match status" value="1"/>
</dbReference>
<dbReference type="FunFam" id="3.90.640.10:FF:000003">
    <property type="entry name" value="Molecular chaperone DnaK"/>
    <property type="match status" value="1"/>
</dbReference>
<dbReference type="Gene3D" id="1.20.1270.10">
    <property type="match status" value="1"/>
</dbReference>
<dbReference type="Gene3D" id="3.30.420.40">
    <property type="match status" value="2"/>
</dbReference>
<dbReference type="Gene3D" id="3.90.640.10">
    <property type="entry name" value="Actin, Chain A, domain 4"/>
    <property type="match status" value="1"/>
</dbReference>
<dbReference type="Gene3D" id="2.60.34.10">
    <property type="entry name" value="Substrate Binding Domain Of DNAk, Chain A, domain 1"/>
    <property type="match status" value="1"/>
</dbReference>
<dbReference type="HAMAP" id="MF_00332">
    <property type="entry name" value="DnaK"/>
    <property type="match status" value="1"/>
</dbReference>
<dbReference type="InterPro" id="IPR043129">
    <property type="entry name" value="ATPase_NBD"/>
</dbReference>
<dbReference type="InterPro" id="IPR012725">
    <property type="entry name" value="Chaperone_DnaK"/>
</dbReference>
<dbReference type="InterPro" id="IPR018181">
    <property type="entry name" value="Heat_shock_70_CS"/>
</dbReference>
<dbReference type="InterPro" id="IPR029048">
    <property type="entry name" value="HSP70_C_sf"/>
</dbReference>
<dbReference type="InterPro" id="IPR029047">
    <property type="entry name" value="HSP70_peptide-bd_sf"/>
</dbReference>
<dbReference type="InterPro" id="IPR013126">
    <property type="entry name" value="Hsp_70_fam"/>
</dbReference>
<dbReference type="NCBIfam" id="NF001413">
    <property type="entry name" value="PRK00290.1"/>
    <property type="match status" value="1"/>
</dbReference>
<dbReference type="NCBIfam" id="TIGR02350">
    <property type="entry name" value="prok_dnaK"/>
    <property type="match status" value="1"/>
</dbReference>
<dbReference type="PANTHER" id="PTHR19375">
    <property type="entry name" value="HEAT SHOCK PROTEIN 70KDA"/>
    <property type="match status" value="1"/>
</dbReference>
<dbReference type="Pfam" id="PF00012">
    <property type="entry name" value="HSP70"/>
    <property type="match status" value="1"/>
</dbReference>
<dbReference type="PRINTS" id="PR00301">
    <property type="entry name" value="HEATSHOCK70"/>
</dbReference>
<dbReference type="SUPFAM" id="SSF53067">
    <property type="entry name" value="Actin-like ATPase domain"/>
    <property type="match status" value="2"/>
</dbReference>
<dbReference type="SUPFAM" id="SSF100934">
    <property type="entry name" value="Heat shock protein 70kD (HSP70), C-terminal subdomain"/>
    <property type="match status" value="1"/>
</dbReference>
<dbReference type="SUPFAM" id="SSF100920">
    <property type="entry name" value="Heat shock protein 70kD (HSP70), peptide-binding domain"/>
    <property type="match status" value="1"/>
</dbReference>
<dbReference type="PROSITE" id="PS00297">
    <property type="entry name" value="HSP70_1"/>
    <property type="match status" value="1"/>
</dbReference>
<dbReference type="PROSITE" id="PS00329">
    <property type="entry name" value="HSP70_2"/>
    <property type="match status" value="1"/>
</dbReference>
<dbReference type="PROSITE" id="PS01036">
    <property type="entry name" value="HSP70_3"/>
    <property type="match status" value="1"/>
</dbReference>
<comment type="function">
    <text evidence="2">Acts as a chaperone.</text>
</comment>
<comment type="function">
    <text evidence="4">In vitro binds to human CD209 (DC-SIGN) and may help mediate adherence to host cells (PubMed:21203928).</text>
</comment>
<comment type="subunit">
    <text evidence="4">Able to bind to host (human) CD209 in vitro (PubMed:21203928).</text>
</comment>
<comment type="subcellular location">
    <subcellularLocation>
        <location evidence="6">Cytoplasm</location>
    </subcellularLocation>
    <subcellularLocation>
        <location evidence="5">Extracellular vesicle</location>
        <location evidence="5">Bacterial extracellular vesicle</location>
    </subcellularLocation>
    <text evidence="1 5">Also present in extracytoplasmic vesicles (PubMed:21364279). Although thought of as a cytoplasmic chaperone this protein is routinely found extracellularly in the absence of cell lysis (By similarity) (PubMed:21364279).</text>
</comment>
<comment type="induction">
    <text evidence="2">By stress conditions e.g. heat shock.</text>
</comment>
<comment type="similarity">
    <text evidence="2">Belongs to the heat shock protein 70 family.</text>
</comment>
<accession>A1KFH2</accession>
<keyword id="KW-0067">ATP-binding</keyword>
<keyword id="KW-0143">Chaperone</keyword>
<keyword id="KW-0963">Cytoplasm</keyword>
<keyword id="KW-0547">Nucleotide-binding</keyword>
<keyword id="KW-0597">Phosphoprotein</keyword>
<keyword id="KW-0346">Stress response</keyword>
<organism>
    <name type="scientific">Mycobacterium bovis (strain BCG / Pasteur 1173P2)</name>
    <dbReference type="NCBI Taxonomy" id="410289"/>
    <lineage>
        <taxon>Bacteria</taxon>
        <taxon>Bacillati</taxon>
        <taxon>Actinomycetota</taxon>
        <taxon>Actinomycetes</taxon>
        <taxon>Mycobacteriales</taxon>
        <taxon>Mycobacteriaceae</taxon>
        <taxon>Mycobacterium</taxon>
        <taxon>Mycobacterium tuberculosis complex</taxon>
    </lineage>
</organism>